<accession>Q8FGA4</accession>
<dbReference type="EC" id="2.7.8.26" evidence="1"/>
<dbReference type="EMBL" id="AE014075">
    <property type="protein sequence ID" value="AAN80937.1"/>
    <property type="status" value="ALT_INIT"/>
    <property type="molecule type" value="Genomic_DNA"/>
</dbReference>
<dbReference type="RefSeq" id="WP_001296197.1">
    <property type="nucleotide sequence ID" value="NZ_CP051263.1"/>
</dbReference>
<dbReference type="STRING" id="199310.c2478"/>
<dbReference type="KEGG" id="ecc:c2478"/>
<dbReference type="eggNOG" id="COG0368">
    <property type="taxonomic scope" value="Bacteria"/>
</dbReference>
<dbReference type="HOGENOM" id="CLU_057426_1_1_6"/>
<dbReference type="UniPathway" id="UPA00148">
    <property type="reaction ID" value="UER00238"/>
</dbReference>
<dbReference type="Proteomes" id="UP000001410">
    <property type="component" value="Chromosome"/>
</dbReference>
<dbReference type="GO" id="GO:0005886">
    <property type="term" value="C:plasma membrane"/>
    <property type="evidence" value="ECO:0007669"/>
    <property type="project" value="UniProtKB-SubCell"/>
</dbReference>
<dbReference type="GO" id="GO:0051073">
    <property type="term" value="F:adenosylcobinamide-GDP ribazoletransferase activity"/>
    <property type="evidence" value="ECO:0007669"/>
    <property type="project" value="UniProtKB-UniRule"/>
</dbReference>
<dbReference type="GO" id="GO:0008818">
    <property type="term" value="F:cobalamin 5'-phosphate synthase activity"/>
    <property type="evidence" value="ECO:0007669"/>
    <property type="project" value="UniProtKB-UniRule"/>
</dbReference>
<dbReference type="GO" id="GO:0009236">
    <property type="term" value="P:cobalamin biosynthetic process"/>
    <property type="evidence" value="ECO:0007669"/>
    <property type="project" value="UniProtKB-UniRule"/>
</dbReference>
<dbReference type="HAMAP" id="MF_00719">
    <property type="entry name" value="CobS"/>
    <property type="match status" value="1"/>
</dbReference>
<dbReference type="InterPro" id="IPR003805">
    <property type="entry name" value="CobS"/>
</dbReference>
<dbReference type="NCBIfam" id="TIGR00317">
    <property type="entry name" value="cobS"/>
    <property type="match status" value="1"/>
</dbReference>
<dbReference type="PANTHER" id="PTHR34148">
    <property type="entry name" value="ADENOSYLCOBINAMIDE-GDP RIBAZOLETRANSFERASE"/>
    <property type="match status" value="1"/>
</dbReference>
<dbReference type="PANTHER" id="PTHR34148:SF1">
    <property type="entry name" value="ADENOSYLCOBINAMIDE-GDP RIBAZOLETRANSFERASE"/>
    <property type="match status" value="1"/>
</dbReference>
<dbReference type="Pfam" id="PF02654">
    <property type="entry name" value="CobS"/>
    <property type="match status" value="1"/>
</dbReference>
<gene>
    <name evidence="1" type="primary">cobS</name>
    <name type="ordered locus">c2478</name>
</gene>
<protein>
    <recommendedName>
        <fullName evidence="1">Adenosylcobinamide-GDP ribazoletransferase</fullName>
        <ecNumber evidence="1">2.7.8.26</ecNumber>
    </recommendedName>
    <alternativeName>
        <fullName evidence="1">Cobalamin synthase</fullName>
    </alternativeName>
    <alternativeName>
        <fullName evidence="1">Cobalamin-5'-phosphate synthase</fullName>
    </alternativeName>
</protein>
<feature type="chain" id="PRO_0000146877" description="Adenosylcobinamide-GDP ribazoletransferase">
    <location>
        <begin position="1"/>
        <end position="247"/>
    </location>
</feature>
<feature type="transmembrane region" description="Helical" evidence="1">
    <location>
        <begin position="34"/>
        <end position="54"/>
    </location>
</feature>
<feature type="transmembrane region" description="Helical" evidence="1">
    <location>
        <begin position="59"/>
        <end position="79"/>
    </location>
</feature>
<feature type="transmembrane region" description="Helical" evidence="1">
    <location>
        <begin position="113"/>
        <end position="133"/>
    </location>
</feature>
<feature type="transmembrane region" description="Helical" evidence="1">
    <location>
        <begin position="138"/>
        <end position="158"/>
    </location>
</feature>
<feature type="transmembrane region" description="Helical" evidence="1">
    <location>
        <begin position="194"/>
        <end position="214"/>
    </location>
</feature>
<evidence type="ECO:0000255" key="1">
    <source>
        <dbReference type="HAMAP-Rule" id="MF_00719"/>
    </source>
</evidence>
<evidence type="ECO:0000305" key="2"/>
<comment type="function">
    <text evidence="1">Joins adenosylcobinamide-GDP and alpha-ribazole to generate adenosylcobalamin (Ado-cobalamin). Also synthesizes adenosylcobalamin 5'-phosphate from adenosylcobinamide-GDP and alpha-ribazole 5'-phosphate.</text>
</comment>
<comment type="catalytic activity">
    <reaction evidence="1">
        <text>alpha-ribazole + adenosylcob(III)inamide-GDP = adenosylcob(III)alamin + GMP + H(+)</text>
        <dbReference type="Rhea" id="RHEA:16049"/>
        <dbReference type="ChEBI" id="CHEBI:10329"/>
        <dbReference type="ChEBI" id="CHEBI:15378"/>
        <dbReference type="ChEBI" id="CHEBI:18408"/>
        <dbReference type="ChEBI" id="CHEBI:58115"/>
        <dbReference type="ChEBI" id="CHEBI:60487"/>
        <dbReference type="EC" id="2.7.8.26"/>
    </reaction>
</comment>
<comment type="catalytic activity">
    <reaction evidence="1">
        <text>alpha-ribazole 5'-phosphate + adenosylcob(III)inamide-GDP = adenosylcob(III)alamin 5'-phosphate + GMP + H(+)</text>
        <dbReference type="Rhea" id="RHEA:23560"/>
        <dbReference type="ChEBI" id="CHEBI:15378"/>
        <dbReference type="ChEBI" id="CHEBI:57918"/>
        <dbReference type="ChEBI" id="CHEBI:58115"/>
        <dbReference type="ChEBI" id="CHEBI:60487"/>
        <dbReference type="ChEBI" id="CHEBI:60493"/>
        <dbReference type="EC" id="2.7.8.26"/>
    </reaction>
</comment>
<comment type="cofactor">
    <cofactor evidence="1">
        <name>Mg(2+)</name>
        <dbReference type="ChEBI" id="CHEBI:18420"/>
    </cofactor>
</comment>
<comment type="pathway">
    <text evidence="1">Cofactor biosynthesis; adenosylcobalamin biosynthesis; adenosylcobalamin from cob(II)yrinate a,c-diamide: step 7/7.</text>
</comment>
<comment type="subcellular location">
    <subcellularLocation>
        <location evidence="1">Cell inner membrane</location>
        <topology evidence="1">Multi-pass membrane protein</topology>
    </subcellularLocation>
</comment>
<comment type="similarity">
    <text evidence="1">Belongs to the CobS family.</text>
</comment>
<comment type="sequence caution" evidence="2">
    <conflict type="erroneous initiation">
        <sequence resource="EMBL-CDS" id="AAN80937"/>
    </conflict>
</comment>
<keyword id="KW-0997">Cell inner membrane</keyword>
<keyword id="KW-1003">Cell membrane</keyword>
<keyword id="KW-0169">Cobalamin biosynthesis</keyword>
<keyword id="KW-0460">Magnesium</keyword>
<keyword id="KW-0472">Membrane</keyword>
<keyword id="KW-1185">Reference proteome</keyword>
<keyword id="KW-0808">Transferase</keyword>
<keyword id="KW-0812">Transmembrane</keyword>
<keyword id="KW-1133">Transmembrane helix</keyword>
<sequence>MSKLFWAMLSFITRLPVPRRWSQGLDFEHYSRGIITFPLIGLLLGAISGLVFMVLQAWCGVPLAALFSVLVLALMTGGFHLDGLADTCDGVFSARSRDRMLEIMRDSRLGTHGGLALIFVVLAKILVLSELALRGEPILASLAAACAVSRGTAALLMYRHRYAREEGLGNVFIGKIDGRQTCVTLGLAAIFAAVLLPGMHGVAAMVVTMVAIFILGQLLKRTLGGQTGDTLGAAIEFGELVFLLALL</sequence>
<organism>
    <name type="scientific">Escherichia coli O6:H1 (strain CFT073 / ATCC 700928 / UPEC)</name>
    <dbReference type="NCBI Taxonomy" id="199310"/>
    <lineage>
        <taxon>Bacteria</taxon>
        <taxon>Pseudomonadati</taxon>
        <taxon>Pseudomonadota</taxon>
        <taxon>Gammaproteobacteria</taxon>
        <taxon>Enterobacterales</taxon>
        <taxon>Enterobacteriaceae</taxon>
        <taxon>Escherichia</taxon>
    </lineage>
</organism>
<reference key="1">
    <citation type="journal article" date="2002" name="Proc. Natl. Acad. Sci. U.S.A.">
        <title>Extensive mosaic structure revealed by the complete genome sequence of uropathogenic Escherichia coli.</title>
        <authorList>
            <person name="Welch R.A."/>
            <person name="Burland V."/>
            <person name="Plunkett G. III"/>
            <person name="Redford P."/>
            <person name="Roesch P."/>
            <person name="Rasko D."/>
            <person name="Buckles E.L."/>
            <person name="Liou S.-R."/>
            <person name="Boutin A."/>
            <person name="Hackett J."/>
            <person name="Stroud D."/>
            <person name="Mayhew G.F."/>
            <person name="Rose D.J."/>
            <person name="Zhou S."/>
            <person name="Schwartz D.C."/>
            <person name="Perna N.T."/>
            <person name="Mobley H.L.T."/>
            <person name="Donnenberg M.S."/>
            <person name="Blattner F.R."/>
        </authorList>
    </citation>
    <scope>NUCLEOTIDE SEQUENCE [LARGE SCALE GENOMIC DNA]</scope>
    <source>
        <strain>CFT073 / ATCC 700928 / UPEC</strain>
    </source>
</reference>
<name>COBS_ECOL6</name>
<proteinExistence type="inferred from homology"/>